<proteinExistence type="inferred from homology"/>
<dbReference type="EMBL" id="CP000916">
    <property type="protein sequence ID" value="ACM23144.1"/>
    <property type="molecule type" value="Genomic_DNA"/>
</dbReference>
<dbReference type="RefSeq" id="WP_015919461.1">
    <property type="nucleotide sequence ID" value="NC_011978.1"/>
</dbReference>
<dbReference type="SMR" id="B9K861"/>
<dbReference type="STRING" id="309803.CTN_0968"/>
<dbReference type="KEGG" id="tna:CTN_0968"/>
<dbReference type="eggNOG" id="COG0779">
    <property type="taxonomic scope" value="Bacteria"/>
</dbReference>
<dbReference type="HOGENOM" id="CLU_070525_2_2_0"/>
<dbReference type="Proteomes" id="UP000000445">
    <property type="component" value="Chromosome"/>
</dbReference>
<dbReference type="GO" id="GO:0005829">
    <property type="term" value="C:cytosol"/>
    <property type="evidence" value="ECO:0007669"/>
    <property type="project" value="TreeGrafter"/>
</dbReference>
<dbReference type="GO" id="GO:0000028">
    <property type="term" value="P:ribosomal small subunit assembly"/>
    <property type="evidence" value="ECO:0007669"/>
    <property type="project" value="TreeGrafter"/>
</dbReference>
<dbReference type="GO" id="GO:0006412">
    <property type="term" value="P:translation"/>
    <property type="evidence" value="ECO:0007669"/>
    <property type="project" value="TreeGrafter"/>
</dbReference>
<dbReference type="CDD" id="cd01734">
    <property type="entry name" value="YlxS_C"/>
    <property type="match status" value="1"/>
</dbReference>
<dbReference type="FunFam" id="3.30.300.70:FF:000001">
    <property type="entry name" value="Ribosome maturation factor RimP"/>
    <property type="match status" value="1"/>
</dbReference>
<dbReference type="Gene3D" id="3.30.300.70">
    <property type="entry name" value="RimP-like superfamily, N-terminal"/>
    <property type="match status" value="1"/>
</dbReference>
<dbReference type="HAMAP" id="MF_01077">
    <property type="entry name" value="RimP"/>
    <property type="match status" value="1"/>
</dbReference>
<dbReference type="InterPro" id="IPR003728">
    <property type="entry name" value="Ribosome_maturation_RimP"/>
</dbReference>
<dbReference type="InterPro" id="IPR028998">
    <property type="entry name" value="RimP_C"/>
</dbReference>
<dbReference type="InterPro" id="IPR036847">
    <property type="entry name" value="RimP_C_sf"/>
</dbReference>
<dbReference type="InterPro" id="IPR028989">
    <property type="entry name" value="RimP_N"/>
</dbReference>
<dbReference type="InterPro" id="IPR035956">
    <property type="entry name" value="RimP_N_sf"/>
</dbReference>
<dbReference type="NCBIfam" id="NF011231">
    <property type="entry name" value="PRK14638.1"/>
    <property type="match status" value="1"/>
</dbReference>
<dbReference type="PANTHER" id="PTHR33867">
    <property type="entry name" value="RIBOSOME MATURATION FACTOR RIMP"/>
    <property type="match status" value="1"/>
</dbReference>
<dbReference type="PANTHER" id="PTHR33867:SF1">
    <property type="entry name" value="RIBOSOME MATURATION FACTOR RIMP"/>
    <property type="match status" value="1"/>
</dbReference>
<dbReference type="Pfam" id="PF17384">
    <property type="entry name" value="DUF150_C"/>
    <property type="match status" value="1"/>
</dbReference>
<dbReference type="Pfam" id="PF02576">
    <property type="entry name" value="RimP_N"/>
    <property type="match status" value="1"/>
</dbReference>
<dbReference type="SUPFAM" id="SSF74942">
    <property type="entry name" value="YhbC-like, C-terminal domain"/>
    <property type="match status" value="1"/>
</dbReference>
<dbReference type="SUPFAM" id="SSF75420">
    <property type="entry name" value="YhbC-like, N-terminal domain"/>
    <property type="match status" value="1"/>
</dbReference>
<accession>B9K861</accession>
<organism>
    <name type="scientific">Thermotoga neapolitana (strain ATCC 49049 / DSM 4359 / NBRC 107923 / NS-E)</name>
    <dbReference type="NCBI Taxonomy" id="309803"/>
    <lineage>
        <taxon>Bacteria</taxon>
        <taxon>Thermotogati</taxon>
        <taxon>Thermotogota</taxon>
        <taxon>Thermotogae</taxon>
        <taxon>Thermotogales</taxon>
        <taxon>Thermotogaceae</taxon>
        <taxon>Thermotoga</taxon>
    </lineage>
</organism>
<keyword id="KW-0963">Cytoplasm</keyword>
<keyword id="KW-0690">Ribosome biogenesis</keyword>
<gene>
    <name evidence="1" type="primary">rimP</name>
    <name type="ordered locus">CTN_0968</name>
</gene>
<sequence length="150" mass="17580">MFEEMIVEKVRKEAERIAEKQGLEIFDIQYRRESRGWVLRVVIDNPVGYVSVRDCELFSRELERFLDREDLIEHSYTLEVSSPGLDRPLRGPKDYQRFTGKLAKIITKDGKTFIGRIESFVDGIVTISDEKGKHEIDIEDVRKANLEIEF</sequence>
<feature type="chain" id="PRO_1000149810" description="Ribosome maturation factor RimP">
    <location>
        <begin position="1"/>
        <end position="150"/>
    </location>
</feature>
<reference key="1">
    <citation type="submission" date="2007-11" db="EMBL/GenBank/DDBJ databases">
        <title>The genome sequence of the hyperthermophilic bacterium Thermotoga neapolitana.</title>
        <authorList>
            <person name="Lim S.K."/>
            <person name="Kim J.S."/>
            <person name="Cha S.H."/>
            <person name="Park B.C."/>
            <person name="Lee D.S."/>
            <person name="Tae H.S."/>
            <person name="Kim S.-J."/>
            <person name="Kim J.J."/>
            <person name="Park K.J."/>
            <person name="Lee S.Y."/>
        </authorList>
    </citation>
    <scope>NUCLEOTIDE SEQUENCE [LARGE SCALE GENOMIC DNA]</scope>
    <source>
        <strain>ATCC 49049 / DSM 4359 / NBRC 107923 / NS-E</strain>
    </source>
</reference>
<name>RIMP_THENN</name>
<evidence type="ECO:0000255" key="1">
    <source>
        <dbReference type="HAMAP-Rule" id="MF_01077"/>
    </source>
</evidence>
<protein>
    <recommendedName>
        <fullName evidence="1">Ribosome maturation factor RimP</fullName>
    </recommendedName>
</protein>
<comment type="function">
    <text evidence="1">Required for maturation of 30S ribosomal subunits.</text>
</comment>
<comment type="subcellular location">
    <subcellularLocation>
        <location evidence="1">Cytoplasm</location>
    </subcellularLocation>
</comment>
<comment type="similarity">
    <text evidence="1">Belongs to the RimP family.</text>
</comment>